<protein>
    <recommendedName>
        <fullName>Hypoxia-inducible lipid droplet-associated protein</fullName>
    </recommendedName>
    <alternativeName>
        <fullName>Hypoxia-inducible gene 2 protein</fullName>
    </alternativeName>
</protein>
<gene>
    <name type="primary">Hilpda</name>
    <name type="synonym">Hig2</name>
</gene>
<organism>
    <name type="scientific">Mus musculus</name>
    <name type="common">Mouse</name>
    <dbReference type="NCBI Taxonomy" id="10090"/>
    <lineage>
        <taxon>Eukaryota</taxon>
        <taxon>Metazoa</taxon>
        <taxon>Chordata</taxon>
        <taxon>Craniata</taxon>
        <taxon>Vertebrata</taxon>
        <taxon>Euteleostomi</taxon>
        <taxon>Mammalia</taxon>
        <taxon>Eutheria</taxon>
        <taxon>Euarchontoglires</taxon>
        <taxon>Glires</taxon>
        <taxon>Rodentia</taxon>
        <taxon>Myomorpha</taxon>
        <taxon>Muroidea</taxon>
        <taxon>Muridae</taxon>
        <taxon>Murinae</taxon>
        <taxon>Mus</taxon>
        <taxon>Mus</taxon>
    </lineage>
</organism>
<feature type="chain" id="PRO_0000083977" description="Hypoxia-inducible lipid droplet-associated protein">
    <location>
        <begin position="1"/>
        <end position="64"/>
    </location>
</feature>
<feature type="transmembrane region" description="Helical" evidence="2">
    <location>
        <begin position="7"/>
        <end position="24"/>
    </location>
</feature>
<feature type="region of interest" description="Required for targeting to lipid droplets" evidence="1">
    <location>
        <begin position="1"/>
        <end position="37"/>
    </location>
</feature>
<feature type="region of interest" description="Disordered" evidence="3">
    <location>
        <begin position="42"/>
        <end position="64"/>
    </location>
</feature>
<feature type="compositionally biased region" description="Polar residues" evidence="3">
    <location>
        <begin position="42"/>
        <end position="51"/>
    </location>
</feature>
<feature type="compositionally biased region" description="Basic and acidic residues" evidence="3">
    <location>
        <begin position="55"/>
        <end position="64"/>
    </location>
</feature>
<feature type="sequence conflict" description="In Ref. 3; AAH20081." evidence="5" ref="3">
    <original>G</original>
    <variation>R</variation>
    <location>
        <position position="37"/>
    </location>
</feature>
<name>HLPDA_MOUSE</name>
<keyword id="KW-0551">Lipid droplet</keyword>
<keyword id="KW-0472">Membrane</keyword>
<keyword id="KW-1185">Reference proteome</keyword>
<keyword id="KW-0964">Secreted</keyword>
<keyword id="KW-0346">Stress response</keyword>
<keyword id="KW-0812">Transmembrane</keyword>
<keyword id="KW-1133">Transmembrane helix</keyword>
<evidence type="ECO:0000250" key="1"/>
<evidence type="ECO:0000255" key="2"/>
<evidence type="ECO:0000256" key="3">
    <source>
        <dbReference type="SAM" id="MobiDB-lite"/>
    </source>
</evidence>
<evidence type="ECO:0000269" key="4">
    <source>
    </source>
</evidence>
<evidence type="ECO:0000305" key="5"/>
<proteinExistence type="evidence at protein level"/>
<accession>Q9JLS0</accession>
<accession>Q3UMU3</accession>
<accession>Q8VDY1</accession>
<reference key="1">
    <citation type="submission" date="1999-04" db="EMBL/GenBank/DDBJ databases">
        <title>Murine HIG2 - a novel hypoxia-induced gene.</title>
        <authorList>
            <person name="Schindler C."/>
            <person name="Denko N.C."/>
            <person name="Koong A.C."/>
            <person name="Giaccia A.J."/>
        </authorList>
    </citation>
    <scope>NUCLEOTIDE SEQUENCE [MRNA]</scope>
</reference>
<reference key="2">
    <citation type="journal article" date="2005" name="Science">
        <title>The transcriptional landscape of the mammalian genome.</title>
        <authorList>
            <person name="Carninci P."/>
            <person name="Kasukawa T."/>
            <person name="Katayama S."/>
            <person name="Gough J."/>
            <person name="Frith M.C."/>
            <person name="Maeda N."/>
            <person name="Oyama R."/>
            <person name="Ravasi T."/>
            <person name="Lenhard B."/>
            <person name="Wells C."/>
            <person name="Kodzius R."/>
            <person name="Shimokawa K."/>
            <person name="Bajic V.B."/>
            <person name="Brenner S.E."/>
            <person name="Batalov S."/>
            <person name="Forrest A.R."/>
            <person name="Zavolan M."/>
            <person name="Davis M.J."/>
            <person name="Wilming L.G."/>
            <person name="Aidinis V."/>
            <person name="Allen J.E."/>
            <person name="Ambesi-Impiombato A."/>
            <person name="Apweiler R."/>
            <person name="Aturaliya R.N."/>
            <person name="Bailey T.L."/>
            <person name="Bansal M."/>
            <person name="Baxter L."/>
            <person name="Beisel K.W."/>
            <person name="Bersano T."/>
            <person name="Bono H."/>
            <person name="Chalk A.M."/>
            <person name="Chiu K.P."/>
            <person name="Choudhary V."/>
            <person name="Christoffels A."/>
            <person name="Clutterbuck D.R."/>
            <person name="Crowe M.L."/>
            <person name="Dalla E."/>
            <person name="Dalrymple B.P."/>
            <person name="de Bono B."/>
            <person name="Della Gatta G."/>
            <person name="di Bernardo D."/>
            <person name="Down T."/>
            <person name="Engstrom P."/>
            <person name="Fagiolini M."/>
            <person name="Faulkner G."/>
            <person name="Fletcher C.F."/>
            <person name="Fukushima T."/>
            <person name="Furuno M."/>
            <person name="Futaki S."/>
            <person name="Gariboldi M."/>
            <person name="Georgii-Hemming P."/>
            <person name="Gingeras T.R."/>
            <person name="Gojobori T."/>
            <person name="Green R.E."/>
            <person name="Gustincich S."/>
            <person name="Harbers M."/>
            <person name="Hayashi Y."/>
            <person name="Hensch T.K."/>
            <person name="Hirokawa N."/>
            <person name="Hill D."/>
            <person name="Huminiecki L."/>
            <person name="Iacono M."/>
            <person name="Ikeo K."/>
            <person name="Iwama A."/>
            <person name="Ishikawa T."/>
            <person name="Jakt M."/>
            <person name="Kanapin A."/>
            <person name="Katoh M."/>
            <person name="Kawasawa Y."/>
            <person name="Kelso J."/>
            <person name="Kitamura H."/>
            <person name="Kitano H."/>
            <person name="Kollias G."/>
            <person name="Krishnan S.P."/>
            <person name="Kruger A."/>
            <person name="Kummerfeld S.K."/>
            <person name="Kurochkin I.V."/>
            <person name="Lareau L.F."/>
            <person name="Lazarevic D."/>
            <person name="Lipovich L."/>
            <person name="Liu J."/>
            <person name="Liuni S."/>
            <person name="McWilliam S."/>
            <person name="Madan Babu M."/>
            <person name="Madera M."/>
            <person name="Marchionni L."/>
            <person name="Matsuda H."/>
            <person name="Matsuzawa S."/>
            <person name="Miki H."/>
            <person name="Mignone F."/>
            <person name="Miyake S."/>
            <person name="Morris K."/>
            <person name="Mottagui-Tabar S."/>
            <person name="Mulder N."/>
            <person name="Nakano N."/>
            <person name="Nakauchi H."/>
            <person name="Ng P."/>
            <person name="Nilsson R."/>
            <person name="Nishiguchi S."/>
            <person name="Nishikawa S."/>
            <person name="Nori F."/>
            <person name="Ohara O."/>
            <person name="Okazaki Y."/>
            <person name="Orlando V."/>
            <person name="Pang K.C."/>
            <person name="Pavan W.J."/>
            <person name="Pavesi G."/>
            <person name="Pesole G."/>
            <person name="Petrovsky N."/>
            <person name="Piazza S."/>
            <person name="Reed J."/>
            <person name="Reid J.F."/>
            <person name="Ring B.Z."/>
            <person name="Ringwald M."/>
            <person name="Rost B."/>
            <person name="Ruan Y."/>
            <person name="Salzberg S.L."/>
            <person name="Sandelin A."/>
            <person name="Schneider C."/>
            <person name="Schoenbach C."/>
            <person name="Sekiguchi K."/>
            <person name="Semple C.A."/>
            <person name="Seno S."/>
            <person name="Sessa L."/>
            <person name="Sheng Y."/>
            <person name="Shibata Y."/>
            <person name="Shimada H."/>
            <person name="Shimada K."/>
            <person name="Silva D."/>
            <person name="Sinclair B."/>
            <person name="Sperling S."/>
            <person name="Stupka E."/>
            <person name="Sugiura K."/>
            <person name="Sultana R."/>
            <person name="Takenaka Y."/>
            <person name="Taki K."/>
            <person name="Tammoja K."/>
            <person name="Tan S.L."/>
            <person name="Tang S."/>
            <person name="Taylor M.S."/>
            <person name="Tegner J."/>
            <person name="Teichmann S.A."/>
            <person name="Ueda H.R."/>
            <person name="van Nimwegen E."/>
            <person name="Verardo R."/>
            <person name="Wei C.L."/>
            <person name="Yagi K."/>
            <person name="Yamanishi H."/>
            <person name="Zabarovsky E."/>
            <person name="Zhu S."/>
            <person name="Zimmer A."/>
            <person name="Hide W."/>
            <person name="Bult C."/>
            <person name="Grimmond S.M."/>
            <person name="Teasdale R.D."/>
            <person name="Liu E.T."/>
            <person name="Brusic V."/>
            <person name="Quackenbush J."/>
            <person name="Wahlestedt C."/>
            <person name="Mattick J.S."/>
            <person name="Hume D.A."/>
            <person name="Kai C."/>
            <person name="Sasaki D."/>
            <person name="Tomaru Y."/>
            <person name="Fukuda S."/>
            <person name="Kanamori-Katayama M."/>
            <person name="Suzuki M."/>
            <person name="Aoki J."/>
            <person name="Arakawa T."/>
            <person name="Iida J."/>
            <person name="Imamura K."/>
            <person name="Itoh M."/>
            <person name="Kato T."/>
            <person name="Kawaji H."/>
            <person name="Kawagashira N."/>
            <person name="Kawashima T."/>
            <person name="Kojima M."/>
            <person name="Kondo S."/>
            <person name="Konno H."/>
            <person name="Nakano K."/>
            <person name="Ninomiya N."/>
            <person name="Nishio T."/>
            <person name="Okada M."/>
            <person name="Plessy C."/>
            <person name="Shibata K."/>
            <person name="Shiraki T."/>
            <person name="Suzuki S."/>
            <person name="Tagami M."/>
            <person name="Waki K."/>
            <person name="Watahiki A."/>
            <person name="Okamura-Oho Y."/>
            <person name="Suzuki H."/>
            <person name="Kawai J."/>
            <person name="Hayashizaki Y."/>
        </authorList>
    </citation>
    <scope>NUCLEOTIDE SEQUENCE [LARGE SCALE MRNA]</scope>
    <source>
        <strain>C57BL/6J</strain>
        <tissue>Lung</tissue>
        <tissue>Tongue</tissue>
    </source>
</reference>
<reference key="3">
    <citation type="journal article" date="2004" name="Genome Res.">
        <title>The status, quality, and expansion of the NIH full-length cDNA project: the Mammalian Gene Collection (MGC).</title>
        <authorList>
            <consortium name="The MGC Project Team"/>
        </authorList>
    </citation>
    <scope>NUCLEOTIDE SEQUENCE [LARGE SCALE MRNA]</scope>
    <source>
        <strain>Czech II</strain>
        <strain>NMRI</strain>
        <tissue>Mammary tumor</tissue>
    </source>
</reference>
<reference key="4">
    <citation type="journal article" date="2010" name="FASEB J.">
        <title>Hypoxia-inducible protein 2 is a novel lipid droplet protein and a specific target gene of hypoxia-inducible factor-1.</title>
        <authorList>
            <person name="Gimm T."/>
            <person name="Wiese M."/>
            <person name="Teschemacher B."/>
            <person name="Deggerich A."/>
            <person name="Schodel J."/>
            <person name="Knaup K.X."/>
            <person name="Hackenbeck T."/>
            <person name="Hellerbrand C."/>
            <person name="Amann K."/>
            <person name="Wiesener M.S."/>
            <person name="Honing S."/>
            <person name="Eckardt K.U."/>
            <person name="Warnecke C."/>
        </authorList>
    </citation>
    <scope>INDUCTION</scope>
</reference>
<sequence length="64" mass="7007">MKFMLNLYVLGIMLTLLSIFVRVMESLGGLLESPLPGSSWITRGQLANTQPPKGLPDHPSRGVQ</sequence>
<dbReference type="EMBL" id="AF141311">
    <property type="protein sequence ID" value="AAF25720.1"/>
    <property type="molecule type" value="mRNA"/>
</dbReference>
<dbReference type="EMBL" id="AK009377">
    <property type="protein sequence ID" value="BAB26253.1"/>
    <property type="molecule type" value="mRNA"/>
</dbReference>
<dbReference type="EMBL" id="AK144676">
    <property type="protein sequence ID" value="BAE26005.1"/>
    <property type="molecule type" value="mRNA"/>
</dbReference>
<dbReference type="EMBL" id="BC020081">
    <property type="protein sequence ID" value="AAH20081.1"/>
    <property type="molecule type" value="mRNA"/>
</dbReference>
<dbReference type="EMBL" id="BC083056">
    <property type="protein sequence ID" value="AAH83056.1"/>
    <property type="molecule type" value="mRNA"/>
</dbReference>
<dbReference type="CCDS" id="CCDS39450.1"/>
<dbReference type="RefSeq" id="NP_076005.1">
    <property type="nucleotide sequence ID" value="NM_023516.5"/>
</dbReference>
<dbReference type="SMR" id="Q9JLS0"/>
<dbReference type="FunCoup" id="Q9JLS0">
    <property type="interactions" value="9"/>
</dbReference>
<dbReference type="STRING" id="10090.ENSMUSP00000060791"/>
<dbReference type="iPTMnet" id="Q9JLS0"/>
<dbReference type="PhosphoSitePlus" id="Q9JLS0"/>
<dbReference type="PaxDb" id="10090-ENSMUSP00000060791"/>
<dbReference type="ProteomicsDB" id="273148"/>
<dbReference type="Antibodypedia" id="2129">
    <property type="antibodies" value="26 antibodies from 13 providers"/>
</dbReference>
<dbReference type="DNASU" id="69573"/>
<dbReference type="Ensembl" id="ENSMUST00000054445.9">
    <property type="protein sequence ID" value="ENSMUSP00000060791.9"/>
    <property type="gene ID" value="ENSMUSG00000043421.9"/>
</dbReference>
<dbReference type="Ensembl" id="ENSMUST00000115289.2">
    <property type="protein sequence ID" value="ENSMUSP00000110944.2"/>
    <property type="gene ID" value="ENSMUSG00000043421.9"/>
</dbReference>
<dbReference type="GeneID" id="69573"/>
<dbReference type="KEGG" id="mmu:69573"/>
<dbReference type="UCSC" id="uc009bdd.2">
    <property type="organism name" value="mouse"/>
</dbReference>
<dbReference type="AGR" id="MGI:1916823"/>
<dbReference type="CTD" id="29923"/>
<dbReference type="MGI" id="MGI:1916823">
    <property type="gene designation" value="Hilpda"/>
</dbReference>
<dbReference type="VEuPathDB" id="HostDB:ENSMUSG00000043421"/>
<dbReference type="eggNOG" id="ENOG502T735">
    <property type="taxonomic scope" value="Eukaryota"/>
</dbReference>
<dbReference type="GeneTree" id="ENSGT00390000014201"/>
<dbReference type="HOGENOM" id="CLU_192601_0_0_1"/>
<dbReference type="InParanoid" id="Q9JLS0"/>
<dbReference type="OMA" id="WAVRGHL"/>
<dbReference type="Reactome" id="R-MMU-8964572">
    <property type="pathway name" value="Lipid particle organization"/>
</dbReference>
<dbReference type="BioGRID-ORCS" id="69573">
    <property type="hits" value="2 hits in 78 CRISPR screens"/>
</dbReference>
<dbReference type="ChiTaRS" id="Hilpda">
    <property type="organism name" value="mouse"/>
</dbReference>
<dbReference type="PRO" id="PR:Q9JLS0"/>
<dbReference type="Proteomes" id="UP000000589">
    <property type="component" value="Chromosome 6"/>
</dbReference>
<dbReference type="RNAct" id="Q9JLS0">
    <property type="molecule type" value="protein"/>
</dbReference>
<dbReference type="Bgee" id="ENSMUSG00000043421">
    <property type="expression patterns" value="Expressed in right lung lobe and 189 other cell types or tissues"/>
</dbReference>
<dbReference type="GO" id="GO:0009986">
    <property type="term" value="C:cell surface"/>
    <property type="evidence" value="ECO:0000250"/>
    <property type="project" value="UniProtKB"/>
</dbReference>
<dbReference type="GO" id="GO:0005615">
    <property type="term" value="C:extracellular space"/>
    <property type="evidence" value="ECO:0000250"/>
    <property type="project" value="UniProtKB"/>
</dbReference>
<dbReference type="GO" id="GO:0005811">
    <property type="term" value="C:lipid droplet"/>
    <property type="evidence" value="ECO:0007669"/>
    <property type="project" value="UniProtKB-SubCell"/>
</dbReference>
<dbReference type="GO" id="GO:0016020">
    <property type="term" value="C:membrane"/>
    <property type="evidence" value="ECO:0007669"/>
    <property type="project" value="UniProtKB-SubCell"/>
</dbReference>
<dbReference type="GO" id="GO:0005654">
    <property type="term" value="C:nucleoplasm"/>
    <property type="evidence" value="ECO:0007669"/>
    <property type="project" value="Ensembl"/>
</dbReference>
<dbReference type="GO" id="GO:0030141">
    <property type="term" value="C:secretory granule"/>
    <property type="evidence" value="ECO:0000250"/>
    <property type="project" value="UniProtKB"/>
</dbReference>
<dbReference type="GO" id="GO:0005102">
    <property type="term" value="F:signaling receptor binding"/>
    <property type="evidence" value="ECO:0000250"/>
    <property type="project" value="UniProtKB"/>
</dbReference>
<dbReference type="GO" id="GO:0035425">
    <property type="term" value="P:autocrine signaling"/>
    <property type="evidence" value="ECO:0000250"/>
    <property type="project" value="UniProtKB"/>
</dbReference>
<dbReference type="GO" id="GO:0071456">
    <property type="term" value="P:cellular response to hypoxia"/>
    <property type="evidence" value="ECO:0007669"/>
    <property type="project" value="Ensembl"/>
</dbReference>
<dbReference type="GO" id="GO:0008284">
    <property type="term" value="P:positive regulation of cell population proliferation"/>
    <property type="evidence" value="ECO:0000250"/>
    <property type="project" value="UniProtKB"/>
</dbReference>
<dbReference type="GO" id="GO:0001819">
    <property type="term" value="P:positive regulation of cytokine production"/>
    <property type="evidence" value="ECO:0000250"/>
    <property type="project" value="UniProtKB"/>
</dbReference>
<dbReference type="GO" id="GO:0010884">
    <property type="term" value="P:positive regulation of lipid storage"/>
    <property type="evidence" value="ECO:0000250"/>
    <property type="project" value="UniProtKB"/>
</dbReference>
<dbReference type="InterPro" id="IPR026190">
    <property type="entry name" value="Hipoxia_HILPDA"/>
</dbReference>
<dbReference type="PANTHER" id="PTHR16886:SF0">
    <property type="entry name" value="HYPOXIA-INDUCIBLE LIPID DROPLET-ASSOCIATED PROTEIN"/>
    <property type="match status" value="1"/>
</dbReference>
<dbReference type="PANTHER" id="PTHR16886">
    <property type="entry name" value="HYPOXIA-INDUCIBLE PROTEIN 2"/>
    <property type="match status" value="1"/>
</dbReference>
<dbReference type="Pfam" id="PF15220">
    <property type="entry name" value="HILPDA"/>
    <property type="match status" value="1"/>
</dbReference>
<comment type="function">
    <text evidence="1">Increases intracellular lipid accumulation. Stimulates expression of cytokines including IL6, MIF and VEGFA. Enhances cell growth and proliferation (By similarity).</text>
</comment>
<comment type="subcellular location">
    <subcellularLocation>
        <location evidence="1">Lipid droplet</location>
    </subcellularLocation>
    <subcellularLocation>
        <location evidence="1">Secreted</location>
    </subcellularLocation>
    <subcellularLocation>
        <location evidence="5">Membrane</location>
        <topology evidence="5">Single-pass membrane protein</topology>
    </subcellularLocation>
</comment>
<comment type="induction">
    <text evidence="4">By hypoxia (at protein level).</text>
</comment>